<accession>P37033</accession>
<accession>Q5ZUV3</accession>
<sequence>MYHYLFSCHKSQESIDGLIEQVKQLLNHVEMEQKAYFLNLLTARVAEFQNELKSEASNTINKQQILIQYEKFAKTLLICIKQPERTSYAIHNYHKGFYYPVAIHDKIKPDPTIENAAIATLGVSLALLLGSIPTFIFNPLFGVIMVSLAVTLLLPSGFYLLIPDSPDTTSKKEEEKRIFMEGAKIINPDVRIEEFDEQPYLSSSLIKT</sequence>
<feature type="chain" id="PRO_0000066073" description="Uncharacterized protein lpg1689">
    <location>
        <begin position="1"/>
        <end position="208"/>
    </location>
</feature>
<organism>
    <name type="scientific">Legionella pneumophila subsp. pneumophila (strain Philadelphia 1 / ATCC 33152 / DSM 7513)</name>
    <dbReference type="NCBI Taxonomy" id="272624"/>
    <lineage>
        <taxon>Bacteria</taxon>
        <taxon>Pseudomonadati</taxon>
        <taxon>Pseudomonadota</taxon>
        <taxon>Gammaproteobacteria</taxon>
        <taxon>Legionellales</taxon>
        <taxon>Legionellaceae</taxon>
        <taxon>Legionella</taxon>
    </lineage>
</organism>
<protein>
    <recommendedName>
        <fullName>Uncharacterized protein lpg1689</fullName>
    </recommendedName>
</protein>
<keyword id="KW-1185">Reference proteome</keyword>
<gene>
    <name type="ordered locus">lpg1689</name>
</gene>
<dbReference type="EMBL" id="L22081">
    <property type="protein sequence ID" value="AAA25294.1"/>
    <property type="molecule type" value="Genomic_DNA"/>
</dbReference>
<dbReference type="EMBL" id="AE017354">
    <property type="protein sequence ID" value="AAU27769.1"/>
    <property type="molecule type" value="Genomic_DNA"/>
</dbReference>
<dbReference type="PIR" id="A48642">
    <property type="entry name" value="A48642"/>
</dbReference>
<dbReference type="RefSeq" id="WP_010947416.1">
    <property type="nucleotide sequence ID" value="NC_002942.5"/>
</dbReference>
<dbReference type="RefSeq" id="YP_095716.1">
    <property type="nucleotide sequence ID" value="NC_002942.5"/>
</dbReference>
<dbReference type="SMR" id="P37033"/>
<dbReference type="STRING" id="272624.lpg1689"/>
<dbReference type="PaxDb" id="272624-lpg1689"/>
<dbReference type="KEGG" id="lpn:lpg1689"/>
<dbReference type="PATRIC" id="fig|272624.6.peg.1770"/>
<dbReference type="eggNOG" id="ENOG5031E5P">
    <property type="taxonomic scope" value="Bacteria"/>
</dbReference>
<dbReference type="HOGENOM" id="CLU_1319613_0_0_6"/>
<dbReference type="OrthoDB" id="5653474at2"/>
<dbReference type="Proteomes" id="UP000000609">
    <property type="component" value="Chromosome"/>
</dbReference>
<reference key="1">
    <citation type="journal article" date="1993" name="J. Bacteriol.">
        <title>The major iron-containing protein of Legionella pneumophila is an aconitase homologous with the human iron-responsive element-binding protein.</title>
        <authorList>
            <person name="Mengaud J.M."/>
            <person name="Horwitz M.A."/>
        </authorList>
    </citation>
    <scope>NUCLEOTIDE SEQUENCE [GENOMIC DNA]</scope>
</reference>
<reference key="2">
    <citation type="journal article" date="2004" name="Science">
        <title>The genomic sequence of the accidental pathogen Legionella pneumophila.</title>
        <authorList>
            <person name="Chien M."/>
            <person name="Morozova I."/>
            <person name="Shi S."/>
            <person name="Sheng H."/>
            <person name="Chen J."/>
            <person name="Gomez S.M."/>
            <person name="Asamani G."/>
            <person name="Hill K."/>
            <person name="Nuara J."/>
            <person name="Feder M."/>
            <person name="Rineer J."/>
            <person name="Greenberg J.J."/>
            <person name="Steshenko V."/>
            <person name="Park S.H."/>
            <person name="Zhao B."/>
            <person name="Teplitskaya E."/>
            <person name="Edwards J.R."/>
            <person name="Pampou S."/>
            <person name="Georghiou A."/>
            <person name="Chou I.-C."/>
            <person name="Iannuccilli W."/>
            <person name="Ulz M.E."/>
            <person name="Kim D.H."/>
            <person name="Geringer-Sameth A."/>
            <person name="Goldsberry C."/>
            <person name="Morozov P."/>
            <person name="Fischer S.G."/>
            <person name="Segal G."/>
            <person name="Qu X."/>
            <person name="Rzhetsky A."/>
            <person name="Zhang P."/>
            <person name="Cayanis E."/>
            <person name="De Jong P.J."/>
            <person name="Ju J."/>
            <person name="Kalachikov S."/>
            <person name="Shuman H.A."/>
            <person name="Russo J.J."/>
        </authorList>
    </citation>
    <scope>NUCLEOTIDE SEQUENCE [LARGE SCALE GENOMIC DNA]</scope>
    <source>
        <strain>Philadelphia 1 / ATCC 33152 / DSM 7513</strain>
    </source>
</reference>
<name>Y1689_LEGPH</name>
<proteinExistence type="predicted"/>